<keyword id="KW-0150">Chloroplast</keyword>
<keyword id="KW-0472">Membrane</keyword>
<keyword id="KW-0520">NAD</keyword>
<keyword id="KW-0521">NADP</keyword>
<keyword id="KW-0934">Plastid</keyword>
<keyword id="KW-0618">Plastoquinone</keyword>
<keyword id="KW-0874">Quinone</keyword>
<keyword id="KW-0793">Thylakoid</keyword>
<keyword id="KW-1278">Translocase</keyword>
<keyword id="KW-0812">Transmembrane</keyword>
<keyword id="KW-1133">Transmembrane helix</keyword>
<keyword id="KW-0813">Transport</keyword>
<accession>Q0G9G6</accession>
<protein>
    <recommendedName>
        <fullName>NAD(P)H-quinone oxidoreductase subunit 6, chloroplastic</fullName>
        <ecNumber>7.1.1.-</ecNumber>
    </recommendedName>
    <alternativeName>
        <fullName>NAD(P)H dehydrogenase subunit 6</fullName>
    </alternativeName>
    <alternativeName>
        <fullName>NADH-plastoquinone oxidoreductase subunit 6</fullName>
    </alternativeName>
</protein>
<feature type="chain" id="PRO_0000360265" description="NAD(P)H-quinone oxidoreductase subunit 6, chloroplastic">
    <location>
        <begin position="1"/>
        <end position="176"/>
    </location>
</feature>
<feature type="transmembrane region" description="Helical" evidence="2">
    <location>
        <begin position="10"/>
        <end position="30"/>
    </location>
</feature>
<feature type="transmembrane region" description="Helical" evidence="2">
    <location>
        <begin position="32"/>
        <end position="52"/>
    </location>
</feature>
<feature type="transmembrane region" description="Helical" evidence="2">
    <location>
        <begin position="61"/>
        <end position="81"/>
    </location>
</feature>
<feature type="transmembrane region" description="Helical" evidence="2">
    <location>
        <begin position="92"/>
        <end position="112"/>
    </location>
</feature>
<feature type="transmembrane region" description="Helical" evidence="2">
    <location>
        <begin position="152"/>
        <end position="172"/>
    </location>
</feature>
<sequence>MDLPGPIHDILLVFLGSGLILGGLGVVLLTNPIYSAFSLGLVLVCISLFHIPSNSYFVAAAQLLIYVGAVNVLIVFAVMFMNGSEYSKDLYLWTVGDGVTSLVCTSILFSLITTISDTSWYGIIWTTRSNQIIEQDLTSNVQQIGIHLSTDFYLPFELISIILLVALIGAISMARQ</sequence>
<gene>
    <name type="primary">ndhG</name>
</gene>
<evidence type="ECO:0000250" key="1"/>
<evidence type="ECO:0000255" key="2"/>
<evidence type="ECO:0000305" key="3"/>
<proteinExistence type="inferred from homology"/>
<geneLocation type="chloroplast"/>
<organism>
    <name type="scientific">Liriodendron tulipifera</name>
    <name type="common">Tuliptree</name>
    <name type="synonym">Tulip poplar</name>
    <dbReference type="NCBI Taxonomy" id="3415"/>
    <lineage>
        <taxon>Eukaryota</taxon>
        <taxon>Viridiplantae</taxon>
        <taxon>Streptophyta</taxon>
        <taxon>Embryophyta</taxon>
        <taxon>Tracheophyta</taxon>
        <taxon>Spermatophyta</taxon>
        <taxon>Magnoliopsida</taxon>
        <taxon>Magnoliidae</taxon>
        <taxon>Magnoliales</taxon>
        <taxon>Magnoliaceae</taxon>
        <taxon>Liriodendron</taxon>
    </lineage>
</organism>
<dbReference type="EC" id="7.1.1.-"/>
<dbReference type="EMBL" id="DQ899947">
    <property type="protein sequence ID" value="ABI32562.1"/>
    <property type="molecule type" value="Genomic_DNA"/>
</dbReference>
<dbReference type="RefSeq" id="YP_740255.1">
    <property type="nucleotide sequence ID" value="NC_008326.1"/>
</dbReference>
<dbReference type="SMR" id="Q0G9G6"/>
<dbReference type="GeneID" id="4266687"/>
<dbReference type="GO" id="GO:0009535">
    <property type="term" value="C:chloroplast thylakoid membrane"/>
    <property type="evidence" value="ECO:0007669"/>
    <property type="project" value="UniProtKB-SubCell"/>
</dbReference>
<dbReference type="GO" id="GO:0008137">
    <property type="term" value="F:NADH dehydrogenase (ubiquinone) activity"/>
    <property type="evidence" value="ECO:0007669"/>
    <property type="project" value="InterPro"/>
</dbReference>
<dbReference type="GO" id="GO:0048038">
    <property type="term" value="F:quinone binding"/>
    <property type="evidence" value="ECO:0007669"/>
    <property type="project" value="UniProtKB-KW"/>
</dbReference>
<dbReference type="FunFam" id="1.20.120.1200:FF:000002">
    <property type="entry name" value="NAD(P)H-quinone oxidoreductase subunit 6, chloroplastic"/>
    <property type="match status" value="1"/>
</dbReference>
<dbReference type="Gene3D" id="1.20.120.1200">
    <property type="entry name" value="NADH-ubiquinone/plastoquinone oxidoreductase chain 6, subunit NuoJ"/>
    <property type="match status" value="1"/>
</dbReference>
<dbReference type="InterPro" id="IPR050290">
    <property type="entry name" value="NAD(P)H-Q_Oxidoreduct_6"/>
</dbReference>
<dbReference type="InterPro" id="IPR001457">
    <property type="entry name" value="NADH_UbQ/plastoQ_OxRdtase_su6"/>
</dbReference>
<dbReference type="InterPro" id="IPR042106">
    <property type="entry name" value="Nuo/plastoQ_OxRdtase_6_NuoJ"/>
</dbReference>
<dbReference type="PANTHER" id="PTHR48479">
    <property type="entry name" value="NAD(P)H-QUINONE OXIDOREDUCTASE SUBUNIT 6, CHLOROPLASTIC"/>
    <property type="match status" value="1"/>
</dbReference>
<dbReference type="PANTHER" id="PTHR48479:SF1">
    <property type="entry name" value="NAD(P)H-QUINONE OXIDOREDUCTASE SUBUNIT 6, CHLOROPLASTIC"/>
    <property type="match status" value="1"/>
</dbReference>
<dbReference type="Pfam" id="PF00499">
    <property type="entry name" value="Oxidored_q3"/>
    <property type="match status" value="1"/>
</dbReference>
<comment type="function">
    <text evidence="1">NDH shuttles electrons from NAD(P)H:plastoquinone, via FMN and iron-sulfur (Fe-S) centers, to quinones in the photosynthetic chain and possibly in a chloroplast respiratory chain. The immediate electron acceptor for the enzyme in this species is believed to be plastoquinone. Couples the redox reaction to proton translocation, and thus conserves the redox energy in a proton gradient (By similarity).</text>
</comment>
<comment type="catalytic activity">
    <reaction>
        <text>a plastoquinone + NADH + (n+1) H(+)(in) = a plastoquinol + NAD(+) + n H(+)(out)</text>
        <dbReference type="Rhea" id="RHEA:42608"/>
        <dbReference type="Rhea" id="RHEA-COMP:9561"/>
        <dbReference type="Rhea" id="RHEA-COMP:9562"/>
        <dbReference type="ChEBI" id="CHEBI:15378"/>
        <dbReference type="ChEBI" id="CHEBI:17757"/>
        <dbReference type="ChEBI" id="CHEBI:57540"/>
        <dbReference type="ChEBI" id="CHEBI:57945"/>
        <dbReference type="ChEBI" id="CHEBI:62192"/>
    </reaction>
</comment>
<comment type="catalytic activity">
    <reaction>
        <text>a plastoquinone + NADPH + (n+1) H(+)(in) = a plastoquinol + NADP(+) + n H(+)(out)</text>
        <dbReference type="Rhea" id="RHEA:42612"/>
        <dbReference type="Rhea" id="RHEA-COMP:9561"/>
        <dbReference type="Rhea" id="RHEA-COMP:9562"/>
        <dbReference type="ChEBI" id="CHEBI:15378"/>
        <dbReference type="ChEBI" id="CHEBI:17757"/>
        <dbReference type="ChEBI" id="CHEBI:57783"/>
        <dbReference type="ChEBI" id="CHEBI:58349"/>
        <dbReference type="ChEBI" id="CHEBI:62192"/>
    </reaction>
</comment>
<comment type="subunit">
    <text evidence="1">NDH is composed of at least 16 different subunits, 5 of which are encoded in the nucleus.</text>
</comment>
<comment type="subcellular location">
    <subcellularLocation>
        <location evidence="1">Plastid</location>
        <location evidence="1">Chloroplast thylakoid membrane</location>
        <topology evidence="1">Multi-pass membrane protein</topology>
    </subcellularLocation>
</comment>
<comment type="similarity">
    <text evidence="3">Belongs to the complex I subunit 6 family.</text>
</comment>
<name>NU6C_LIRTU</name>
<reference key="1">
    <citation type="journal article" date="2006" name="BMC Evol. Biol.">
        <title>Complete plastid genome sequences of Drimys, Liriodendron, and Piper: implications for the phylogenetic relationships of magnoliids.</title>
        <authorList>
            <person name="Cai Z."/>
            <person name="Penaflor C."/>
            <person name="Kuehl J.V."/>
            <person name="Leebens-Mack J."/>
            <person name="Carlson J.E."/>
            <person name="dePamphilis C.W."/>
            <person name="Boore J.L."/>
            <person name="Jansen R.K."/>
        </authorList>
    </citation>
    <scope>NUCLEOTIDE SEQUENCE [LARGE SCALE GENOMIC DNA]</scope>
</reference>